<dbReference type="EC" id="2.7.7.18" evidence="1"/>
<dbReference type="EMBL" id="CP000133">
    <property type="protein sequence ID" value="ABC92813.1"/>
    <property type="molecule type" value="Genomic_DNA"/>
</dbReference>
<dbReference type="SMR" id="Q2K2X3"/>
<dbReference type="KEGG" id="ret:RHE_CH04070"/>
<dbReference type="eggNOG" id="COG1057">
    <property type="taxonomic scope" value="Bacteria"/>
</dbReference>
<dbReference type="HOGENOM" id="CLU_069765_2_0_5"/>
<dbReference type="UniPathway" id="UPA00253">
    <property type="reaction ID" value="UER00332"/>
</dbReference>
<dbReference type="Proteomes" id="UP000001936">
    <property type="component" value="Chromosome"/>
</dbReference>
<dbReference type="GO" id="GO:0005524">
    <property type="term" value="F:ATP binding"/>
    <property type="evidence" value="ECO:0007669"/>
    <property type="project" value="UniProtKB-KW"/>
</dbReference>
<dbReference type="GO" id="GO:0004515">
    <property type="term" value="F:nicotinate-nucleotide adenylyltransferase activity"/>
    <property type="evidence" value="ECO:0007669"/>
    <property type="project" value="UniProtKB-UniRule"/>
</dbReference>
<dbReference type="GO" id="GO:0009435">
    <property type="term" value="P:NAD biosynthetic process"/>
    <property type="evidence" value="ECO:0007669"/>
    <property type="project" value="UniProtKB-UniRule"/>
</dbReference>
<dbReference type="CDD" id="cd02165">
    <property type="entry name" value="NMNAT"/>
    <property type="match status" value="1"/>
</dbReference>
<dbReference type="Gene3D" id="3.40.50.620">
    <property type="entry name" value="HUPs"/>
    <property type="match status" value="1"/>
</dbReference>
<dbReference type="HAMAP" id="MF_00244">
    <property type="entry name" value="NaMN_adenylyltr"/>
    <property type="match status" value="1"/>
</dbReference>
<dbReference type="InterPro" id="IPR004821">
    <property type="entry name" value="Cyt_trans-like"/>
</dbReference>
<dbReference type="InterPro" id="IPR005248">
    <property type="entry name" value="NadD/NMNAT"/>
</dbReference>
<dbReference type="InterPro" id="IPR014729">
    <property type="entry name" value="Rossmann-like_a/b/a_fold"/>
</dbReference>
<dbReference type="NCBIfam" id="TIGR00482">
    <property type="entry name" value="nicotinate (nicotinamide) nucleotide adenylyltransferase"/>
    <property type="match status" value="1"/>
</dbReference>
<dbReference type="NCBIfam" id="NF000843">
    <property type="entry name" value="PRK00071.2-2"/>
    <property type="match status" value="1"/>
</dbReference>
<dbReference type="NCBIfam" id="NF000845">
    <property type="entry name" value="PRK00071.2-4"/>
    <property type="match status" value="1"/>
</dbReference>
<dbReference type="PANTHER" id="PTHR39321">
    <property type="entry name" value="NICOTINATE-NUCLEOTIDE ADENYLYLTRANSFERASE-RELATED"/>
    <property type="match status" value="1"/>
</dbReference>
<dbReference type="PANTHER" id="PTHR39321:SF3">
    <property type="entry name" value="PHOSPHOPANTETHEINE ADENYLYLTRANSFERASE"/>
    <property type="match status" value="1"/>
</dbReference>
<dbReference type="Pfam" id="PF01467">
    <property type="entry name" value="CTP_transf_like"/>
    <property type="match status" value="1"/>
</dbReference>
<dbReference type="SUPFAM" id="SSF52374">
    <property type="entry name" value="Nucleotidylyl transferase"/>
    <property type="match status" value="1"/>
</dbReference>
<name>NADD_RHIEC</name>
<feature type="chain" id="PRO_0000310133" description="Probable nicotinate-nucleotide adenylyltransferase">
    <location>
        <begin position="1"/>
        <end position="192"/>
    </location>
</feature>
<gene>
    <name evidence="1" type="primary">nadD</name>
    <name type="ordered locus">RHE_CH04070</name>
</gene>
<reference key="1">
    <citation type="journal article" date="2006" name="Proc. Natl. Acad. Sci. U.S.A.">
        <title>The partitioned Rhizobium etli genome: genetic and metabolic redundancy in seven interacting replicons.</title>
        <authorList>
            <person name="Gonzalez V."/>
            <person name="Santamaria R.I."/>
            <person name="Bustos P."/>
            <person name="Hernandez-Gonzalez I."/>
            <person name="Medrano-Soto A."/>
            <person name="Moreno-Hagelsieb G."/>
            <person name="Janga S.C."/>
            <person name="Ramirez M.A."/>
            <person name="Jimenez-Jacinto V."/>
            <person name="Collado-Vides J."/>
            <person name="Davila G."/>
        </authorList>
    </citation>
    <scope>NUCLEOTIDE SEQUENCE [LARGE SCALE GENOMIC DNA]</scope>
    <source>
        <strain>ATCC 51251 / DSM 11541 / JCM 21823 / NBRC 15573 / CFN 42</strain>
    </source>
</reference>
<evidence type="ECO:0000255" key="1">
    <source>
        <dbReference type="HAMAP-Rule" id="MF_00244"/>
    </source>
</evidence>
<sequence>MVVGLFGGSFNPPHEGHALVAEIAIKRLGLDQLWWMVTPGNPLKSRNLLAPLAERIAESERVAADPRIKVTAFEQALGVSYTANTLARVKARNPHVHFIWIMGADSLQTFHKWQKWQEIARTFPIAVIDRPGATLSYLSSKMTRTFDFARIDEDDARVLWKKPAPAWTFIHGPRSGLSSTAIRNGALPGAVG</sequence>
<organism>
    <name type="scientific">Rhizobium etli (strain ATCC 51251 / DSM 11541 / JCM 21823 / NBRC 15573 / CFN 42)</name>
    <dbReference type="NCBI Taxonomy" id="347834"/>
    <lineage>
        <taxon>Bacteria</taxon>
        <taxon>Pseudomonadati</taxon>
        <taxon>Pseudomonadota</taxon>
        <taxon>Alphaproteobacteria</taxon>
        <taxon>Hyphomicrobiales</taxon>
        <taxon>Rhizobiaceae</taxon>
        <taxon>Rhizobium/Agrobacterium group</taxon>
        <taxon>Rhizobium</taxon>
    </lineage>
</organism>
<accession>Q2K2X3</accession>
<protein>
    <recommendedName>
        <fullName evidence="1">Probable nicotinate-nucleotide adenylyltransferase</fullName>
        <ecNumber evidence="1">2.7.7.18</ecNumber>
    </recommendedName>
    <alternativeName>
        <fullName evidence="1">Deamido-NAD(+) diphosphorylase</fullName>
    </alternativeName>
    <alternativeName>
        <fullName evidence="1">Deamido-NAD(+) pyrophosphorylase</fullName>
    </alternativeName>
    <alternativeName>
        <fullName evidence="1">Nicotinate mononucleotide adenylyltransferase</fullName>
        <shortName evidence="1">NaMN adenylyltransferase</shortName>
    </alternativeName>
</protein>
<keyword id="KW-0067">ATP-binding</keyword>
<keyword id="KW-0520">NAD</keyword>
<keyword id="KW-0547">Nucleotide-binding</keyword>
<keyword id="KW-0548">Nucleotidyltransferase</keyword>
<keyword id="KW-0662">Pyridine nucleotide biosynthesis</keyword>
<keyword id="KW-1185">Reference proteome</keyword>
<keyword id="KW-0808">Transferase</keyword>
<proteinExistence type="inferred from homology"/>
<comment type="function">
    <text evidence="1">Catalyzes the reversible adenylation of nicotinate mononucleotide (NaMN) to nicotinic acid adenine dinucleotide (NaAD).</text>
</comment>
<comment type="catalytic activity">
    <reaction evidence="1">
        <text>nicotinate beta-D-ribonucleotide + ATP + H(+) = deamido-NAD(+) + diphosphate</text>
        <dbReference type="Rhea" id="RHEA:22860"/>
        <dbReference type="ChEBI" id="CHEBI:15378"/>
        <dbReference type="ChEBI" id="CHEBI:30616"/>
        <dbReference type="ChEBI" id="CHEBI:33019"/>
        <dbReference type="ChEBI" id="CHEBI:57502"/>
        <dbReference type="ChEBI" id="CHEBI:58437"/>
        <dbReference type="EC" id="2.7.7.18"/>
    </reaction>
</comment>
<comment type="pathway">
    <text evidence="1">Cofactor biosynthesis; NAD(+) biosynthesis; deamido-NAD(+) from nicotinate D-ribonucleotide: step 1/1.</text>
</comment>
<comment type="similarity">
    <text evidence="1">Belongs to the NadD family.</text>
</comment>